<feature type="chain" id="PRO_1000194222" description="Small ribosomal subunit protein uS12">
    <location>
        <begin position="1"/>
        <end position="124"/>
    </location>
</feature>
<feature type="modified residue" description="3-methylthioaspartic acid" evidence="1">
    <location>
        <position position="89"/>
    </location>
</feature>
<keyword id="KW-0488">Methylation</keyword>
<keyword id="KW-0687">Ribonucleoprotein</keyword>
<keyword id="KW-0689">Ribosomal protein</keyword>
<keyword id="KW-0694">RNA-binding</keyword>
<keyword id="KW-0699">rRNA-binding</keyword>
<keyword id="KW-0820">tRNA-binding</keyword>
<gene>
    <name evidence="2" type="primary">rpsL</name>
    <name type="ordered locus">VCM66_0343</name>
</gene>
<evidence type="ECO:0000250" key="1"/>
<evidence type="ECO:0000255" key="2">
    <source>
        <dbReference type="HAMAP-Rule" id="MF_00403"/>
    </source>
</evidence>
<evidence type="ECO:0000305" key="3"/>
<proteinExistence type="inferred from homology"/>
<organism>
    <name type="scientific">Vibrio cholerae serotype O1 (strain M66-2)</name>
    <dbReference type="NCBI Taxonomy" id="579112"/>
    <lineage>
        <taxon>Bacteria</taxon>
        <taxon>Pseudomonadati</taxon>
        <taxon>Pseudomonadota</taxon>
        <taxon>Gammaproteobacteria</taxon>
        <taxon>Vibrionales</taxon>
        <taxon>Vibrionaceae</taxon>
        <taxon>Vibrio</taxon>
    </lineage>
</organism>
<dbReference type="EMBL" id="CP001233">
    <property type="protein sequence ID" value="ACP04671.1"/>
    <property type="molecule type" value="Genomic_DNA"/>
</dbReference>
<dbReference type="RefSeq" id="WP_000201237.1">
    <property type="nucleotide sequence ID" value="NC_012578.1"/>
</dbReference>
<dbReference type="SMR" id="C3LR91"/>
<dbReference type="GeneID" id="94014859"/>
<dbReference type="KEGG" id="vcm:VCM66_0343"/>
<dbReference type="HOGENOM" id="CLU_104295_1_2_6"/>
<dbReference type="Proteomes" id="UP000001217">
    <property type="component" value="Chromosome I"/>
</dbReference>
<dbReference type="GO" id="GO:0015935">
    <property type="term" value="C:small ribosomal subunit"/>
    <property type="evidence" value="ECO:0007669"/>
    <property type="project" value="InterPro"/>
</dbReference>
<dbReference type="GO" id="GO:0019843">
    <property type="term" value="F:rRNA binding"/>
    <property type="evidence" value="ECO:0007669"/>
    <property type="project" value="UniProtKB-UniRule"/>
</dbReference>
<dbReference type="GO" id="GO:0003735">
    <property type="term" value="F:structural constituent of ribosome"/>
    <property type="evidence" value="ECO:0007669"/>
    <property type="project" value="InterPro"/>
</dbReference>
<dbReference type="GO" id="GO:0000049">
    <property type="term" value="F:tRNA binding"/>
    <property type="evidence" value="ECO:0007669"/>
    <property type="project" value="UniProtKB-UniRule"/>
</dbReference>
<dbReference type="GO" id="GO:0006412">
    <property type="term" value="P:translation"/>
    <property type="evidence" value="ECO:0007669"/>
    <property type="project" value="UniProtKB-UniRule"/>
</dbReference>
<dbReference type="CDD" id="cd03368">
    <property type="entry name" value="Ribosomal_S12"/>
    <property type="match status" value="1"/>
</dbReference>
<dbReference type="FunFam" id="2.40.50.140:FF:000001">
    <property type="entry name" value="30S ribosomal protein S12"/>
    <property type="match status" value="1"/>
</dbReference>
<dbReference type="Gene3D" id="2.40.50.140">
    <property type="entry name" value="Nucleic acid-binding proteins"/>
    <property type="match status" value="1"/>
</dbReference>
<dbReference type="HAMAP" id="MF_00403_B">
    <property type="entry name" value="Ribosomal_uS12_B"/>
    <property type="match status" value="1"/>
</dbReference>
<dbReference type="InterPro" id="IPR012340">
    <property type="entry name" value="NA-bd_OB-fold"/>
</dbReference>
<dbReference type="InterPro" id="IPR006032">
    <property type="entry name" value="Ribosomal_uS12"/>
</dbReference>
<dbReference type="InterPro" id="IPR005679">
    <property type="entry name" value="Ribosomal_uS12_bac"/>
</dbReference>
<dbReference type="NCBIfam" id="TIGR00981">
    <property type="entry name" value="rpsL_bact"/>
    <property type="match status" value="1"/>
</dbReference>
<dbReference type="PANTHER" id="PTHR11652">
    <property type="entry name" value="30S RIBOSOMAL PROTEIN S12 FAMILY MEMBER"/>
    <property type="match status" value="1"/>
</dbReference>
<dbReference type="Pfam" id="PF00164">
    <property type="entry name" value="Ribosom_S12_S23"/>
    <property type="match status" value="1"/>
</dbReference>
<dbReference type="PIRSF" id="PIRSF002133">
    <property type="entry name" value="Ribosomal_S12/S23"/>
    <property type="match status" value="1"/>
</dbReference>
<dbReference type="PRINTS" id="PR01034">
    <property type="entry name" value="RIBOSOMALS12"/>
</dbReference>
<dbReference type="SUPFAM" id="SSF50249">
    <property type="entry name" value="Nucleic acid-binding proteins"/>
    <property type="match status" value="1"/>
</dbReference>
<dbReference type="PROSITE" id="PS00055">
    <property type="entry name" value="RIBOSOMAL_S12"/>
    <property type="match status" value="1"/>
</dbReference>
<reference key="1">
    <citation type="journal article" date="2008" name="PLoS ONE">
        <title>A recalibrated molecular clock and independent origins for the cholera pandemic clones.</title>
        <authorList>
            <person name="Feng L."/>
            <person name="Reeves P.R."/>
            <person name="Lan R."/>
            <person name="Ren Y."/>
            <person name="Gao C."/>
            <person name="Zhou Z."/>
            <person name="Ren Y."/>
            <person name="Cheng J."/>
            <person name="Wang W."/>
            <person name="Wang J."/>
            <person name="Qian W."/>
            <person name="Li D."/>
            <person name="Wang L."/>
        </authorList>
    </citation>
    <scope>NUCLEOTIDE SEQUENCE [LARGE SCALE GENOMIC DNA]</scope>
    <source>
        <strain>M66-2</strain>
    </source>
</reference>
<accession>C3LR91</accession>
<protein>
    <recommendedName>
        <fullName evidence="2">Small ribosomal subunit protein uS12</fullName>
    </recommendedName>
    <alternativeName>
        <fullName evidence="3">30S ribosomal protein S12</fullName>
    </alternativeName>
</protein>
<sequence length="124" mass="13665">MATINQLVRKPRAKQVVKSNVPALAACPQKRGVCTRVYTTTPKKPNSALRKVCRVRLTNGFEVTSYIGGEGHNLQEHSVVLIRGGRVKDLPGVRYHTVRGALDCAGVNDRKQARSKYGVKRPKS</sequence>
<comment type="function">
    <text evidence="2">With S4 and S5 plays an important role in translational accuracy.</text>
</comment>
<comment type="function">
    <text evidence="2">Interacts with and stabilizes bases of the 16S rRNA that are involved in tRNA selection in the A site and with the mRNA backbone. Located at the interface of the 30S and 50S subunits, it traverses the body of the 30S subunit contacting proteins on the other side and probably holding the rRNA structure together. The combined cluster of proteins S8, S12 and S17 appears to hold together the shoulder and platform of the 30S subunit.</text>
</comment>
<comment type="subunit">
    <text evidence="2">Part of the 30S ribosomal subunit. Contacts proteins S8 and S17. May interact with IF1 in the 30S initiation complex.</text>
</comment>
<comment type="similarity">
    <text evidence="2">Belongs to the universal ribosomal protein uS12 family.</text>
</comment>
<name>RS12_VIBCM</name>